<protein>
    <recommendedName>
        <fullName>Pesticidal crystal protein Cry1Ja</fullName>
    </recommendedName>
    <alternativeName>
        <fullName>133 kDa crystal protein</fullName>
    </alternativeName>
    <alternativeName>
        <fullName>Crystaline entomocidal protoxin</fullName>
    </alternativeName>
    <alternativeName>
        <fullName>Insecticidal delta-endotoxin CryIJ(a)</fullName>
    </alternativeName>
</protein>
<keyword id="KW-0749">Sporulation</keyword>
<keyword id="KW-0800">Toxin</keyword>
<keyword id="KW-0843">Virulence</keyword>
<feature type="chain" id="PRO_0000174052" description="Pesticidal crystal protein Cry1Ja">
    <location>
        <begin position="1"/>
        <end position="1167"/>
    </location>
</feature>
<comment type="function">
    <text>Promotes colloidosmotic lysis by binding to the midgut epithelial cells of many lepidopteran larvae.</text>
</comment>
<comment type="developmental stage">
    <text>The crystal protein is produced during sporulation and is accumulated both as an inclusion and as part of the spore coat.</text>
</comment>
<comment type="miscellaneous">
    <text>Toxic segment of the protein is located in the N-terminus.</text>
</comment>
<comment type="similarity">
    <text evidence="1">Belongs to the delta endotoxin family.</text>
</comment>
<name>CR1JA_BACTU</name>
<sequence length="1167" mass="132761">MEINNQKQCIPYNCLSNPEEVLLDGERILPDIDPLEVSLSLLQFLLNNFVPGGGFISGLVDKIWGALRPSEWDLFLAQIERLIDQRIEATVRAKAITELEGLGRNYQIYAEAFKEWESDPDNEAAKSRVIDRFRILDGLIEANIPSFRIIGFEVPLLSVYVQAANLHLALLRDSVIFGERWGLTTKNVNDIYNRQIREIHEYSNHCVDTYNTELERLGFRSIAQWRIYNQFRRELTLTVLDIVALFPNYDSRLYPIQTFSQLTREIVTSPVSEFYYGVINSGNIIGTLTEQQIRRPHLMDFFNSMIMYTSDNRREHYWSGLEMTAYFTGFAGAQVSFPLVGTRGESAPPLTVRSVNDGIYRILSAPFYSAPFLGTIVLGSRGEKFDFALNNISPPPSTIYRHPGTVDSLVSIPPQDNSVPPHRGSSHRLSHVTMRASSPIFHWTHRSATTTNTINPNAIIQIPLVKAFNLHSGATVVRGPGFTGGDILRRTNTGTFADMRVNITGPLSQRYRVRIRYASTTDLQFFTRINGTSVNQGNFQRTMNRGDNLESGNFRTAGFSTPFSFSNAQSTFTLGTQAFSNQEVYIDRIEFVPAEVTFEAESDLERAQKAVNALFTSTNQLGLKTDVTDYQIDQVSNLVECLSDEFCLDEKRELSEKVKHAKRLSDKRNLLQDPNFTSINRQLDRGWRGSTDITIQGGNDVFKENYVTLPGTFDECYPTYLYQKIDESKLKAYTRYELRGYIEDSQDLEVYLIRYNAKHETVNVPGTGSLWPLSVESPIGRCGEPNRCVPHIEWNPDLDCSCRDGEKCAHHSHHFSLDIDVGCTDLNEDLGVWVIFKIKTQDGHARLGNLEFLEEKPLLGEALARVKRAEKKWRDKREQLQFETNIVYKEAKESVDALFVDSHYNRLQADTNITMIHAADKRVHRIREAYLPELSVIPGVNADIFEELEGLIFTAFSLYDARNIIKNGDFNNGLSCWNVKGHVDIQQNDHRSVLVVPEWESEVSQEVRVCPGRGYILRVTAYKEGYGEGCVTIHEIEDNTDELKFSNCIEEEVYPTDTGNDYTAHQGTTGCADACNSRNVGYEDGYEINTTASVNYKPTYEEEMYTDVRRDNHCEYDRGYGNHTPLPAGYVTKELEYFPETDTVWIEIGETEGTFIVDSVELLLMEE</sequence>
<accession>Q45738</accession>
<gene>
    <name type="primary">cry1Ja</name>
    <name type="synonym">cryET4</name>
    <name type="synonym">cryIJ(a)</name>
</gene>
<proteinExistence type="evidence at transcript level"/>
<evidence type="ECO:0000305" key="1"/>
<organism>
    <name type="scientific">Bacillus thuringiensis</name>
    <dbReference type="NCBI Taxonomy" id="1428"/>
    <lineage>
        <taxon>Bacteria</taxon>
        <taxon>Bacillati</taxon>
        <taxon>Bacillota</taxon>
        <taxon>Bacilli</taxon>
        <taxon>Bacillales</taxon>
        <taxon>Bacillaceae</taxon>
        <taxon>Bacillus</taxon>
        <taxon>Bacillus cereus group</taxon>
    </lineage>
</organism>
<reference key="1">
    <citation type="patent" date="1994-06-21" number="US5322687">
        <title>Bacillus thuringiensis cryet4 and cryet5 toxin genes and proteins toxic to lepidopteran insects.</title>
        <authorList>
            <person name="Donovan W.P."/>
            <person name="Tan Y."/>
            <person name="Jany C.S."/>
            <person name="Gonzalez J.M. Jr."/>
        </authorList>
    </citation>
    <scope>NUCLEOTIDE SEQUENCE [GENOMIC DNA]</scope>
    <source>
        <strain>NRRL B-21110 / EG5847</strain>
    </source>
</reference>
<dbReference type="EMBL" id="L32019">
    <property type="protein sequence ID" value="AAA22341.1"/>
    <property type="molecule type" value="Genomic_DNA"/>
</dbReference>
<dbReference type="RefSeq" id="WP_098369107.1">
    <property type="nucleotide sequence ID" value="NZ_JARSYC010000004.1"/>
</dbReference>
<dbReference type="SMR" id="Q45738"/>
<dbReference type="GO" id="GO:0005102">
    <property type="term" value="F:signaling receptor binding"/>
    <property type="evidence" value="ECO:0007669"/>
    <property type="project" value="InterPro"/>
</dbReference>
<dbReference type="GO" id="GO:0090729">
    <property type="term" value="F:toxin activity"/>
    <property type="evidence" value="ECO:0007669"/>
    <property type="project" value="UniProtKB-KW"/>
</dbReference>
<dbReference type="GO" id="GO:0030435">
    <property type="term" value="P:sporulation resulting in formation of a cellular spore"/>
    <property type="evidence" value="ECO:0007669"/>
    <property type="project" value="UniProtKB-KW"/>
</dbReference>
<dbReference type="GO" id="GO:0001907">
    <property type="term" value="P:symbiont-mediated killing of host cell"/>
    <property type="evidence" value="ECO:0007669"/>
    <property type="project" value="InterPro"/>
</dbReference>
<dbReference type="CDD" id="cd04085">
    <property type="entry name" value="delta_endotoxin_C"/>
    <property type="match status" value="1"/>
</dbReference>
<dbReference type="Gene3D" id="2.60.120.260">
    <property type="entry name" value="Galactose-binding domain-like"/>
    <property type="match status" value="1"/>
</dbReference>
<dbReference type="Gene3D" id="2.100.10.10">
    <property type="entry name" value="Pesticidal crystal protein, central domain"/>
    <property type="match status" value="1"/>
</dbReference>
<dbReference type="Gene3D" id="1.20.190.10">
    <property type="entry name" value="Pesticidal crystal protein, N-terminal domain"/>
    <property type="match status" value="1"/>
</dbReference>
<dbReference type="InterPro" id="IPR048645">
    <property type="entry name" value="Cry1Ac-like_dom-VII"/>
</dbReference>
<dbReference type="InterPro" id="IPR041587">
    <property type="entry name" value="Cry_V"/>
</dbReference>
<dbReference type="InterPro" id="IPR008979">
    <property type="entry name" value="Galactose-bd-like_sf"/>
</dbReference>
<dbReference type="InterPro" id="IPR038979">
    <property type="entry name" value="Pest_crys"/>
</dbReference>
<dbReference type="InterPro" id="IPR054544">
    <property type="entry name" value="Pest_crys_Cry1Aa_dom-IV"/>
</dbReference>
<dbReference type="InterPro" id="IPR005638">
    <property type="entry name" value="Pest_crys_dom-III"/>
</dbReference>
<dbReference type="InterPro" id="IPR005639">
    <property type="entry name" value="Pest_crys_dom_I"/>
</dbReference>
<dbReference type="InterPro" id="IPR036716">
    <property type="entry name" value="Pest_crys_N_sf"/>
</dbReference>
<dbReference type="InterPro" id="IPR036399">
    <property type="entry name" value="Pest_cryst_cen_dom_sf"/>
</dbReference>
<dbReference type="InterPro" id="IPR001178">
    <property type="entry name" value="Pest_cryst_dom_II"/>
</dbReference>
<dbReference type="PANTHER" id="PTHR37003">
    <property type="entry name" value="ENDOTOXIN_N DOMAIN-CONTAINING PROTEIN-RELATED"/>
    <property type="match status" value="1"/>
</dbReference>
<dbReference type="PANTHER" id="PTHR37003:SF2">
    <property type="entry name" value="PESTICIDAL CRYSTAL PROTEIN N-TERMINAL DOMAIN-CONTAINING PROTEIN"/>
    <property type="match status" value="1"/>
</dbReference>
<dbReference type="Pfam" id="PF17997">
    <property type="entry name" value="Cry1Ac_D5"/>
    <property type="match status" value="1"/>
</dbReference>
<dbReference type="Pfam" id="PF21463">
    <property type="entry name" value="Cry1Ac_dom-VII"/>
    <property type="match status" value="1"/>
</dbReference>
<dbReference type="Pfam" id="PF03944">
    <property type="entry name" value="Endotoxin_C"/>
    <property type="match status" value="1"/>
</dbReference>
<dbReference type="Pfam" id="PF18449">
    <property type="entry name" value="Endotoxin_C2"/>
    <property type="match status" value="1"/>
</dbReference>
<dbReference type="Pfam" id="PF00555">
    <property type="entry name" value="Endotoxin_M"/>
    <property type="match status" value="1"/>
</dbReference>
<dbReference type="Pfam" id="PF03945">
    <property type="entry name" value="Endotoxin_N"/>
    <property type="match status" value="1"/>
</dbReference>
<dbReference type="SUPFAM" id="SSF51096">
    <property type="entry name" value="delta-Endotoxin (insectocide), middle domain"/>
    <property type="match status" value="1"/>
</dbReference>
<dbReference type="SUPFAM" id="SSF56849">
    <property type="entry name" value="delta-Endotoxin (insectocide), N-terminal domain"/>
    <property type="match status" value="1"/>
</dbReference>
<dbReference type="SUPFAM" id="SSF49785">
    <property type="entry name" value="Galactose-binding domain-like"/>
    <property type="match status" value="1"/>
</dbReference>